<protein>
    <recommendedName>
        <fullName evidence="1">CTP synthase</fullName>
        <ecNumber evidence="1">6.3.4.2</ecNumber>
    </recommendedName>
    <alternativeName>
        <fullName evidence="1">Cytidine 5'-triphosphate synthase</fullName>
    </alternativeName>
    <alternativeName>
        <fullName evidence="1">Cytidine triphosphate synthetase</fullName>
        <shortName evidence="1">CTP synthetase</shortName>
        <shortName evidence="1">CTPS</shortName>
    </alternativeName>
    <alternativeName>
        <fullName evidence="1">UTP--ammonia ligase</fullName>
    </alternativeName>
</protein>
<feature type="chain" id="PRO_1000139530" description="CTP synthase">
    <location>
        <begin position="1"/>
        <end position="542"/>
    </location>
</feature>
<feature type="domain" description="Glutamine amidotransferase type-1" evidence="1">
    <location>
        <begin position="290"/>
        <end position="541"/>
    </location>
</feature>
<feature type="region of interest" description="Amidoligase domain" evidence="1">
    <location>
        <begin position="1"/>
        <end position="265"/>
    </location>
</feature>
<feature type="active site" description="Nucleophile; for glutamine hydrolysis" evidence="1">
    <location>
        <position position="378"/>
    </location>
</feature>
<feature type="active site" evidence="1">
    <location>
        <position position="514"/>
    </location>
</feature>
<feature type="active site" evidence="1">
    <location>
        <position position="516"/>
    </location>
</feature>
<feature type="binding site" evidence="1">
    <location>
        <position position="13"/>
    </location>
    <ligand>
        <name>CTP</name>
        <dbReference type="ChEBI" id="CHEBI:37563"/>
        <note>allosteric inhibitor</note>
    </ligand>
</feature>
<feature type="binding site" evidence="1">
    <location>
        <position position="13"/>
    </location>
    <ligand>
        <name>UTP</name>
        <dbReference type="ChEBI" id="CHEBI:46398"/>
    </ligand>
</feature>
<feature type="binding site" evidence="1">
    <location>
        <begin position="14"/>
        <end position="19"/>
    </location>
    <ligand>
        <name>ATP</name>
        <dbReference type="ChEBI" id="CHEBI:30616"/>
    </ligand>
</feature>
<feature type="binding site" evidence="1">
    <location>
        <position position="71"/>
    </location>
    <ligand>
        <name>ATP</name>
        <dbReference type="ChEBI" id="CHEBI:30616"/>
    </ligand>
</feature>
<feature type="binding site" evidence="1">
    <location>
        <position position="71"/>
    </location>
    <ligand>
        <name>Mg(2+)</name>
        <dbReference type="ChEBI" id="CHEBI:18420"/>
    </ligand>
</feature>
<feature type="binding site" evidence="1">
    <location>
        <position position="139"/>
    </location>
    <ligand>
        <name>Mg(2+)</name>
        <dbReference type="ChEBI" id="CHEBI:18420"/>
    </ligand>
</feature>
<feature type="binding site" evidence="1">
    <location>
        <begin position="146"/>
        <end position="148"/>
    </location>
    <ligand>
        <name>CTP</name>
        <dbReference type="ChEBI" id="CHEBI:37563"/>
        <note>allosteric inhibitor</note>
    </ligand>
</feature>
<feature type="binding site" evidence="1">
    <location>
        <begin position="186"/>
        <end position="191"/>
    </location>
    <ligand>
        <name>CTP</name>
        <dbReference type="ChEBI" id="CHEBI:37563"/>
        <note>allosteric inhibitor</note>
    </ligand>
</feature>
<feature type="binding site" evidence="1">
    <location>
        <begin position="186"/>
        <end position="191"/>
    </location>
    <ligand>
        <name>UTP</name>
        <dbReference type="ChEBI" id="CHEBI:46398"/>
    </ligand>
</feature>
<feature type="binding site" evidence="1">
    <location>
        <position position="222"/>
    </location>
    <ligand>
        <name>CTP</name>
        <dbReference type="ChEBI" id="CHEBI:37563"/>
        <note>allosteric inhibitor</note>
    </ligand>
</feature>
<feature type="binding site" evidence="1">
    <location>
        <position position="222"/>
    </location>
    <ligand>
        <name>UTP</name>
        <dbReference type="ChEBI" id="CHEBI:46398"/>
    </ligand>
</feature>
<feature type="binding site" evidence="1">
    <location>
        <position position="351"/>
    </location>
    <ligand>
        <name>L-glutamine</name>
        <dbReference type="ChEBI" id="CHEBI:58359"/>
    </ligand>
</feature>
<feature type="binding site" evidence="1">
    <location>
        <begin position="379"/>
        <end position="382"/>
    </location>
    <ligand>
        <name>L-glutamine</name>
        <dbReference type="ChEBI" id="CHEBI:58359"/>
    </ligand>
</feature>
<feature type="binding site" evidence="1">
    <location>
        <position position="402"/>
    </location>
    <ligand>
        <name>L-glutamine</name>
        <dbReference type="ChEBI" id="CHEBI:58359"/>
    </ligand>
</feature>
<feature type="binding site" evidence="1">
    <location>
        <position position="469"/>
    </location>
    <ligand>
        <name>L-glutamine</name>
        <dbReference type="ChEBI" id="CHEBI:58359"/>
    </ligand>
</feature>
<keyword id="KW-0067">ATP-binding</keyword>
<keyword id="KW-0315">Glutamine amidotransferase</keyword>
<keyword id="KW-0436">Ligase</keyword>
<keyword id="KW-0460">Magnesium</keyword>
<keyword id="KW-0479">Metal-binding</keyword>
<keyword id="KW-0547">Nucleotide-binding</keyword>
<keyword id="KW-0665">Pyrimidine biosynthesis</keyword>
<comment type="function">
    <text evidence="1">Catalyzes the ATP-dependent amination of UTP to CTP with either L-glutamine or ammonia as the source of nitrogen. Regulates intracellular CTP levels through interactions with the four ribonucleotide triphosphates.</text>
</comment>
<comment type="catalytic activity">
    <reaction evidence="1">
        <text>UTP + L-glutamine + ATP + H2O = CTP + L-glutamate + ADP + phosphate + 2 H(+)</text>
        <dbReference type="Rhea" id="RHEA:26426"/>
        <dbReference type="ChEBI" id="CHEBI:15377"/>
        <dbReference type="ChEBI" id="CHEBI:15378"/>
        <dbReference type="ChEBI" id="CHEBI:29985"/>
        <dbReference type="ChEBI" id="CHEBI:30616"/>
        <dbReference type="ChEBI" id="CHEBI:37563"/>
        <dbReference type="ChEBI" id="CHEBI:43474"/>
        <dbReference type="ChEBI" id="CHEBI:46398"/>
        <dbReference type="ChEBI" id="CHEBI:58359"/>
        <dbReference type="ChEBI" id="CHEBI:456216"/>
        <dbReference type="EC" id="6.3.4.2"/>
    </reaction>
</comment>
<comment type="catalytic activity">
    <reaction evidence="1">
        <text>L-glutamine + H2O = L-glutamate + NH4(+)</text>
        <dbReference type="Rhea" id="RHEA:15889"/>
        <dbReference type="ChEBI" id="CHEBI:15377"/>
        <dbReference type="ChEBI" id="CHEBI:28938"/>
        <dbReference type="ChEBI" id="CHEBI:29985"/>
        <dbReference type="ChEBI" id="CHEBI:58359"/>
    </reaction>
</comment>
<comment type="catalytic activity">
    <reaction evidence="1">
        <text>UTP + NH4(+) + ATP = CTP + ADP + phosphate + 2 H(+)</text>
        <dbReference type="Rhea" id="RHEA:16597"/>
        <dbReference type="ChEBI" id="CHEBI:15378"/>
        <dbReference type="ChEBI" id="CHEBI:28938"/>
        <dbReference type="ChEBI" id="CHEBI:30616"/>
        <dbReference type="ChEBI" id="CHEBI:37563"/>
        <dbReference type="ChEBI" id="CHEBI:43474"/>
        <dbReference type="ChEBI" id="CHEBI:46398"/>
        <dbReference type="ChEBI" id="CHEBI:456216"/>
    </reaction>
</comment>
<comment type="activity regulation">
    <text evidence="1">Allosterically activated by GTP, when glutamine is the substrate; GTP has no effect on the reaction when ammonia is the substrate. The allosteric effector GTP functions by stabilizing the protein conformation that binds the tetrahedral intermediate(s) formed during glutamine hydrolysis. Inhibited by the product CTP, via allosteric rather than competitive inhibition.</text>
</comment>
<comment type="pathway">
    <text evidence="1">Pyrimidine metabolism; CTP biosynthesis via de novo pathway; CTP from UDP: step 2/2.</text>
</comment>
<comment type="subunit">
    <text evidence="1">Homotetramer.</text>
</comment>
<comment type="miscellaneous">
    <text evidence="1">CTPSs have evolved a hybrid strategy for distinguishing between UTP and CTP. The overlapping regions of the product feedback inhibitory and substrate sites recognize a common feature in both compounds, the triphosphate moiety. To differentiate isosteric substrate and product pyrimidine rings, an additional pocket far from the expected kinase/ligase catalytic site, specifically recognizes the cytosine and ribose portions of the product inhibitor.</text>
</comment>
<comment type="similarity">
    <text evidence="1">Belongs to the CTP synthase family.</text>
</comment>
<gene>
    <name evidence="1" type="primary">pyrG</name>
    <name type="ordered locus">PSPA7_1502</name>
</gene>
<accession>A6V1F1</accession>
<sequence>MTRYIFVTGGVVSSLGKGIASASLAAILEARGLKITMLKLDPYINVDPGTMSPFQHGEVFVTQDGAETDLDLGHYERFVRTTMTQNNNFTTGRVYMDVLRKERRGDYLGATVQVIPHITDEIKRRIIKGAGDADVALVEIGGTVGDIESQPFLEAIRQLRVEIGAKRAMLMHLTLVPYIATAGETKTKPTQHSVKELRSIGLQPDVLVCRSDHPIDVSSRRKIALFTNVEERAVIALEDVDTIYRIPSVLHAQGLDDIVVERFGLECGQADLSEWDRVVDAKLNPEREVTIAMVGKYMELLDAYKSLIEAMTHAGIQSRTKVNLRYIDSEDIEQQGTSLLEGVDAILVPGGFGLRGVEGKISTVQYARENKIPYLGICLGMQVAVIEYARNVLGWSDANSTEFDKSSGHPVVGLITEWQDATGATEIRTEASDLGGTMRLGAQECQLQTGTLVHDCYAKDVIVERHRHRYEVNNNLLPQLEQAGLKISGRSGDGALVEVVEAPEHPWFVACQFHPEFTSTPRDGHPLFSGFVNAALKYSGKA</sequence>
<dbReference type="EC" id="6.3.4.2" evidence="1"/>
<dbReference type="EMBL" id="CP000744">
    <property type="protein sequence ID" value="ABR83589.1"/>
    <property type="molecule type" value="Genomic_DNA"/>
</dbReference>
<dbReference type="RefSeq" id="WP_003092366.1">
    <property type="nucleotide sequence ID" value="NC_009656.1"/>
</dbReference>
<dbReference type="SMR" id="A6V1F1"/>
<dbReference type="MEROPS" id="C26.964"/>
<dbReference type="KEGG" id="pap:PSPA7_1502"/>
<dbReference type="HOGENOM" id="CLU_011675_5_0_6"/>
<dbReference type="UniPathway" id="UPA00159">
    <property type="reaction ID" value="UER00277"/>
</dbReference>
<dbReference type="Proteomes" id="UP000001582">
    <property type="component" value="Chromosome"/>
</dbReference>
<dbReference type="GO" id="GO:0005829">
    <property type="term" value="C:cytosol"/>
    <property type="evidence" value="ECO:0007669"/>
    <property type="project" value="TreeGrafter"/>
</dbReference>
<dbReference type="GO" id="GO:0005524">
    <property type="term" value="F:ATP binding"/>
    <property type="evidence" value="ECO:0007669"/>
    <property type="project" value="UniProtKB-KW"/>
</dbReference>
<dbReference type="GO" id="GO:0003883">
    <property type="term" value="F:CTP synthase activity"/>
    <property type="evidence" value="ECO:0007669"/>
    <property type="project" value="UniProtKB-UniRule"/>
</dbReference>
<dbReference type="GO" id="GO:0004359">
    <property type="term" value="F:glutaminase activity"/>
    <property type="evidence" value="ECO:0007669"/>
    <property type="project" value="RHEA"/>
</dbReference>
<dbReference type="GO" id="GO:0042802">
    <property type="term" value="F:identical protein binding"/>
    <property type="evidence" value="ECO:0007669"/>
    <property type="project" value="TreeGrafter"/>
</dbReference>
<dbReference type="GO" id="GO:0046872">
    <property type="term" value="F:metal ion binding"/>
    <property type="evidence" value="ECO:0007669"/>
    <property type="project" value="UniProtKB-KW"/>
</dbReference>
<dbReference type="GO" id="GO:0044210">
    <property type="term" value="P:'de novo' CTP biosynthetic process"/>
    <property type="evidence" value="ECO:0007669"/>
    <property type="project" value="UniProtKB-UniRule"/>
</dbReference>
<dbReference type="GO" id="GO:0019856">
    <property type="term" value="P:pyrimidine nucleobase biosynthetic process"/>
    <property type="evidence" value="ECO:0007669"/>
    <property type="project" value="TreeGrafter"/>
</dbReference>
<dbReference type="CDD" id="cd03113">
    <property type="entry name" value="CTPS_N"/>
    <property type="match status" value="1"/>
</dbReference>
<dbReference type="CDD" id="cd01746">
    <property type="entry name" value="GATase1_CTP_Synthase"/>
    <property type="match status" value="1"/>
</dbReference>
<dbReference type="FunFam" id="3.40.50.300:FF:000009">
    <property type="entry name" value="CTP synthase"/>
    <property type="match status" value="1"/>
</dbReference>
<dbReference type="FunFam" id="3.40.50.880:FF:000002">
    <property type="entry name" value="CTP synthase"/>
    <property type="match status" value="1"/>
</dbReference>
<dbReference type="Gene3D" id="3.40.50.880">
    <property type="match status" value="1"/>
</dbReference>
<dbReference type="Gene3D" id="3.40.50.300">
    <property type="entry name" value="P-loop containing nucleotide triphosphate hydrolases"/>
    <property type="match status" value="1"/>
</dbReference>
<dbReference type="HAMAP" id="MF_01227">
    <property type="entry name" value="PyrG"/>
    <property type="match status" value="1"/>
</dbReference>
<dbReference type="InterPro" id="IPR029062">
    <property type="entry name" value="Class_I_gatase-like"/>
</dbReference>
<dbReference type="InterPro" id="IPR004468">
    <property type="entry name" value="CTP_synthase"/>
</dbReference>
<dbReference type="InterPro" id="IPR017456">
    <property type="entry name" value="CTP_synthase_N"/>
</dbReference>
<dbReference type="InterPro" id="IPR017926">
    <property type="entry name" value="GATASE"/>
</dbReference>
<dbReference type="InterPro" id="IPR033828">
    <property type="entry name" value="GATase1_CTP_Synthase"/>
</dbReference>
<dbReference type="InterPro" id="IPR027417">
    <property type="entry name" value="P-loop_NTPase"/>
</dbReference>
<dbReference type="NCBIfam" id="NF003792">
    <property type="entry name" value="PRK05380.1"/>
    <property type="match status" value="1"/>
</dbReference>
<dbReference type="NCBIfam" id="TIGR00337">
    <property type="entry name" value="PyrG"/>
    <property type="match status" value="1"/>
</dbReference>
<dbReference type="PANTHER" id="PTHR11550">
    <property type="entry name" value="CTP SYNTHASE"/>
    <property type="match status" value="1"/>
</dbReference>
<dbReference type="PANTHER" id="PTHR11550:SF0">
    <property type="entry name" value="CTP SYNTHASE-RELATED"/>
    <property type="match status" value="1"/>
</dbReference>
<dbReference type="Pfam" id="PF06418">
    <property type="entry name" value="CTP_synth_N"/>
    <property type="match status" value="1"/>
</dbReference>
<dbReference type="Pfam" id="PF00117">
    <property type="entry name" value="GATase"/>
    <property type="match status" value="1"/>
</dbReference>
<dbReference type="SUPFAM" id="SSF52317">
    <property type="entry name" value="Class I glutamine amidotransferase-like"/>
    <property type="match status" value="1"/>
</dbReference>
<dbReference type="SUPFAM" id="SSF52540">
    <property type="entry name" value="P-loop containing nucleoside triphosphate hydrolases"/>
    <property type="match status" value="1"/>
</dbReference>
<dbReference type="PROSITE" id="PS51273">
    <property type="entry name" value="GATASE_TYPE_1"/>
    <property type="match status" value="1"/>
</dbReference>
<evidence type="ECO:0000255" key="1">
    <source>
        <dbReference type="HAMAP-Rule" id="MF_01227"/>
    </source>
</evidence>
<name>PYRG_PSEP7</name>
<proteinExistence type="inferred from homology"/>
<reference key="1">
    <citation type="submission" date="2007-06" db="EMBL/GenBank/DDBJ databases">
        <authorList>
            <person name="Dodson R.J."/>
            <person name="Harkins D."/>
            <person name="Paulsen I.T."/>
        </authorList>
    </citation>
    <scope>NUCLEOTIDE SEQUENCE [LARGE SCALE GENOMIC DNA]</scope>
    <source>
        <strain>DSM 24068 / PA7</strain>
    </source>
</reference>
<organism>
    <name type="scientific">Pseudomonas paraeruginosa (strain DSM 24068 / PA7)</name>
    <name type="common">Pseudomonas aeruginosa (strain PA7)</name>
    <dbReference type="NCBI Taxonomy" id="381754"/>
    <lineage>
        <taxon>Bacteria</taxon>
        <taxon>Pseudomonadati</taxon>
        <taxon>Pseudomonadota</taxon>
        <taxon>Gammaproteobacteria</taxon>
        <taxon>Pseudomonadales</taxon>
        <taxon>Pseudomonadaceae</taxon>
        <taxon>Pseudomonas</taxon>
        <taxon>Pseudomonas paraeruginosa</taxon>
    </lineage>
</organism>